<proteinExistence type="inferred from homology"/>
<reference key="1">
    <citation type="journal article" date="2001" name="Proc. Natl. Acad. Sci. U.S.A.">
        <title>Complete genome sequence of Caulobacter crescentus.</title>
        <authorList>
            <person name="Nierman W.C."/>
            <person name="Feldblyum T.V."/>
            <person name="Laub M.T."/>
            <person name="Paulsen I.T."/>
            <person name="Nelson K.E."/>
            <person name="Eisen J.A."/>
            <person name="Heidelberg J.F."/>
            <person name="Alley M.R.K."/>
            <person name="Ohta N."/>
            <person name="Maddock J.R."/>
            <person name="Potocka I."/>
            <person name="Nelson W.C."/>
            <person name="Newton A."/>
            <person name="Stephens C."/>
            <person name="Phadke N.D."/>
            <person name="Ely B."/>
            <person name="DeBoy R.T."/>
            <person name="Dodson R.J."/>
            <person name="Durkin A.S."/>
            <person name="Gwinn M.L."/>
            <person name="Haft D.H."/>
            <person name="Kolonay J.F."/>
            <person name="Smit J."/>
            <person name="Craven M.B."/>
            <person name="Khouri H.M."/>
            <person name="Shetty J."/>
            <person name="Berry K.J."/>
            <person name="Utterback T.R."/>
            <person name="Tran K."/>
            <person name="Wolf A.M."/>
            <person name="Vamathevan J.J."/>
            <person name="Ermolaeva M.D."/>
            <person name="White O."/>
            <person name="Salzberg S.L."/>
            <person name="Venter J.C."/>
            <person name="Shapiro L."/>
            <person name="Fraser C.M."/>
        </authorList>
    </citation>
    <scope>NUCLEOTIDE SEQUENCE [LARGE SCALE GENOMIC DNA]</scope>
    <source>
        <strain>ATCC 19089 / CIP 103742 / CB 15</strain>
    </source>
</reference>
<evidence type="ECO:0000250" key="1"/>
<evidence type="ECO:0000305" key="2"/>
<dbReference type="EC" id="2.7.7.7"/>
<dbReference type="EMBL" id="AE005673">
    <property type="protein sequence ID" value="AAK25173.1"/>
    <property type="molecule type" value="Genomic_DNA"/>
</dbReference>
<dbReference type="PIR" id="A87647">
    <property type="entry name" value="A87647"/>
</dbReference>
<dbReference type="RefSeq" id="NP_422005.1">
    <property type="nucleotide sequence ID" value="NC_002696.2"/>
</dbReference>
<dbReference type="RefSeq" id="WP_010921044.1">
    <property type="nucleotide sequence ID" value="NC_002696.2"/>
</dbReference>
<dbReference type="SMR" id="Q9A3J3"/>
<dbReference type="STRING" id="190650.CC_3211"/>
<dbReference type="EnsemblBacteria" id="AAK25173">
    <property type="protein sequence ID" value="AAK25173"/>
    <property type="gene ID" value="CC_3211"/>
</dbReference>
<dbReference type="KEGG" id="ccr:CC_3211"/>
<dbReference type="PATRIC" id="fig|190650.5.peg.3217"/>
<dbReference type="eggNOG" id="COG0587">
    <property type="taxonomic scope" value="Bacteria"/>
</dbReference>
<dbReference type="HOGENOM" id="CLU_001600_4_0_5"/>
<dbReference type="BioCyc" id="CAULO:CC3211-MONOMER"/>
<dbReference type="Proteomes" id="UP000001816">
    <property type="component" value="Chromosome"/>
</dbReference>
<dbReference type="GO" id="GO:0005737">
    <property type="term" value="C:cytoplasm"/>
    <property type="evidence" value="ECO:0007669"/>
    <property type="project" value="UniProtKB-SubCell"/>
</dbReference>
<dbReference type="GO" id="GO:0008408">
    <property type="term" value="F:3'-5' exonuclease activity"/>
    <property type="evidence" value="ECO:0007669"/>
    <property type="project" value="InterPro"/>
</dbReference>
<dbReference type="GO" id="GO:0003887">
    <property type="term" value="F:DNA-directed DNA polymerase activity"/>
    <property type="evidence" value="ECO:0007669"/>
    <property type="project" value="UniProtKB-UniRule"/>
</dbReference>
<dbReference type="GO" id="GO:0003676">
    <property type="term" value="F:nucleic acid binding"/>
    <property type="evidence" value="ECO:0007669"/>
    <property type="project" value="InterPro"/>
</dbReference>
<dbReference type="GO" id="GO:0006281">
    <property type="term" value="P:DNA repair"/>
    <property type="evidence" value="ECO:0007669"/>
    <property type="project" value="UniProtKB-UniRule"/>
</dbReference>
<dbReference type="GO" id="GO:0006260">
    <property type="term" value="P:DNA replication"/>
    <property type="evidence" value="ECO:0007669"/>
    <property type="project" value="UniProtKB-KW"/>
</dbReference>
<dbReference type="CDD" id="cd04485">
    <property type="entry name" value="DnaE_OBF"/>
    <property type="match status" value="1"/>
</dbReference>
<dbReference type="CDD" id="cd07434">
    <property type="entry name" value="PHP_PolIIIA_DnaE2"/>
    <property type="match status" value="1"/>
</dbReference>
<dbReference type="Gene3D" id="3.20.20.140">
    <property type="entry name" value="Metal-dependent hydrolases"/>
    <property type="match status" value="1"/>
</dbReference>
<dbReference type="Gene3D" id="2.40.50.140">
    <property type="entry name" value="Nucleic acid-binding proteins"/>
    <property type="match status" value="1"/>
</dbReference>
<dbReference type="HAMAP" id="MF_01902">
    <property type="entry name" value="DNApol_error_prone"/>
    <property type="match status" value="1"/>
</dbReference>
<dbReference type="InterPro" id="IPR011708">
    <property type="entry name" value="DNA_pol3_alpha_NTPase_dom"/>
</dbReference>
<dbReference type="InterPro" id="IPR040982">
    <property type="entry name" value="DNA_pol3_finger"/>
</dbReference>
<dbReference type="InterPro" id="IPR023073">
    <property type="entry name" value="DnaE2"/>
</dbReference>
<dbReference type="InterPro" id="IPR004805">
    <property type="entry name" value="DnaE2/DnaE/PolC"/>
</dbReference>
<dbReference type="InterPro" id="IPR029460">
    <property type="entry name" value="DNAPol_HHH"/>
</dbReference>
<dbReference type="InterPro" id="IPR012340">
    <property type="entry name" value="NA-bd_OB-fold"/>
</dbReference>
<dbReference type="InterPro" id="IPR004365">
    <property type="entry name" value="NA-bd_OB_tRNA"/>
</dbReference>
<dbReference type="InterPro" id="IPR004013">
    <property type="entry name" value="PHP_dom"/>
</dbReference>
<dbReference type="InterPro" id="IPR003141">
    <property type="entry name" value="Pol/His_phosphatase_N"/>
</dbReference>
<dbReference type="InterPro" id="IPR016195">
    <property type="entry name" value="Pol/histidinol_Pase-like"/>
</dbReference>
<dbReference type="NCBIfam" id="TIGR00594">
    <property type="entry name" value="polc"/>
    <property type="match status" value="1"/>
</dbReference>
<dbReference type="NCBIfam" id="NF004225">
    <property type="entry name" value="PRK05672.1"/>
    <property type="match status" value="1"/>
</dbReference>
<dbReference type="PANTHER" id="PTHR32294">
    <property type="entry name" value="DNA POLYMERASE III SUBUNIT ALPHA"/>
    <property type="match status" value="1"/>
</dbReference>
<dbReference type="PANTHER" id="PTHR32294:SF4">
    <property type="entry name" value="ERROR-PRONE DNA POLYMERASE"/>
    <property type="match status" value="1"/>
</dbReference>
<dbReference type="Pfam" id="PF07733">
    <property type="entry name" value="DNA_pol3_alpha"/>
    <property type="match status" value="1"/>
</dbReference>
<dbReference type="Pfam" id="PF17657">
    <property type="entry name" value="DNA_pol3_finger"/>
    <property type="match status" value="1"/>
</dbReference>
<dbReference type="Pfam" id="PF14579">
    <property type="entry name" value="HHH_6"/>
    <property type="match status" value="1"/>
</dbReference>
<dbReference type="Pfam" id="PF02811">
    <property type="entry name" value="PHP"/>
    <property type="match status" value="1"/>
</dbReference>
<dbReference type="Pfam" id="PF01336">
    <property type="entry name" value="tRNA_anti-codon"/>
    <property type="match status" value="1"/>
</dbReference>
<dbReference type="SMART" id="SM00481">
    <property type="entry name" value="POLIIIAc"/>
    <property type="match status" value="1"/>
</dbReference>
<dbReference type="SUPFAM" id="SSF89550">
    <property type="entry name" value="PHP domain-like"/>
    <property type="match status" value="1"/>
</dbReference>
<accession>Q9A3J3</accession>
<sequence length="1083" mass="120800">MRPPVYAELQATTNFSFLRGASHAEELALTAEALGLTAIGIVDRNSLAGVVRAWTAAKRRSIRVLTGCRLDFMDGAPSLLCYPTDREAFGRLTRLLTIGQLRAEKGECHLTWRDFLDHSEGQLGLIVPPRVLDDSFEQHLTRMAGDLRGRSWLAASRAYAARDLQRLARLESLGRTSGAPIVATNDVLYHGPERRPLQDVISCVREHCAIQEAGFRLEANAERHIKSPEEMARLFDRWPRAVERTVEIVERIGFDLKDIREQYPDEPVPPGKTAMQHLTDLTWKGAAWRYPNGVSPKVTAQIQEELRLIEKMDYPNYFITVHDIVREARSMGILCQGRGSAANSSVCFCLGVTAIDPTEHRLLFTRFISENRGEPPDIDVDFEHDRREEVMQYVFQRYGRAYAAICGTVIHYRPRSAIRDVGKALGLTEDVTSLLAGTVWGSWGDGLPEDHLRNAGLDPKAPEIARAVGLANDLIGFPRHLSQHVGGFVLTKRRLDETVPIGKAAMKDRTFIEWDKDDIDSLGLMKVDILALGMLHAIQRAMTMLREDHGQDWLKDLADIPKEVPGVYDMLCAADSVGVFQVESRAQMSMLPRLRPREFYDLVIQVAIVRPGPIQGDMVHPYLKRRNKEEPVDWPKPSPEHGPPDELQEILGKTFGVPLFQEQAMSLAIEAAKFTPDEADGLRKAMATFRNLGSPDAYRNKFIEGMVGRGYERAFAERCFKQIEGFSHYGFPESHAASFAKLVYVSAWIKWAWPDVFCAALINAQPMGFYQPAQLVRDAREHGVEVLPPDILTSDWDCTLAPISTGFRPPRVRHDKVACQETRPRWKAVRLGFRQIKGLRETLDIPPLLKARGEGARTPAEFAQGGVPQKALELLAEADAFASVGLSRREALWAVKGLKGEHKAPVQAPLLAGLPLFEERVALPAMAATQEVAEDYRTTSLSLKAHPIGFYRSMLAARGVVPAERLLSLKDGARVSVAGLVLIRQRPGTAKGVVFVTLEDETGVANAVVWKDRFDAARNVVMTASFLIVHGRVQRADNVIHVVAERFTDLSAELSSLRDEPGAPAPRIRQKVSGRLLRSRDFH</sequence>
<keyword id="KW-0963">Cytoplasm</keyword>
<keyword id="KW-0227">DNA damage</keyword>
<keyword id="KW-0234">DNA repair</keyword>
<keyword id="KW-0235">DNA replication</keyword>
<keyword id="KW-0239">DNA-directed DNA polymerase</keyword>
<keyword id="KW-0548">Nucleotidyltransferase</keyword>
<keyword id="KW-1185">Reference proteome</keyword>
<keyword id="KW-0808">Transferase</keyword>
<gene>
    <name type="primary">dnaE2</name>
    <name type="ordered locus">CC_3211</name>
</gene>
<feature type="chain" id="PRO_0000103375" description="Error-prone DNA polymerase">
    <location>
        <begin position="1"/>
        <end position="1083"/>
    </location>
</feature>
<protein>
    <recommendedName>
        <fullName>Error-prone DNA polymerase</fullName>
        <ecNumber>2.7.7.7</ecNumber>
    </recommendedName>
</protein>
<organism>
    <name type="scientific">Caulobacter vibrioides (strain ATCC 19089 / CIP 103742 / CB 15)</name>
    <name type="common">Caulobacter crescentus</name>
    <dbReference type="NCBI Taxonomy" id="190650"/>
    <lineage>
        <taxon>Bacteria</taxon>
        <taxon>Pseudomonadati</taxon>
        <taxon>Pseudomonadota</taxon>
        <taxon>Alphaproteobacteria</taxon>
        <taxon>Caulobacterales</taxon>
        <taxon>Caulobacteraceae</taxon>
        <taxon>Caulobacter</taxon>
    </lineage>
</organism>
<name>DNAE2_CAUVC</name>
<comment type="function">
    <text evidence="1">DNA polymerase involved in damage-induced mutagenesis and translesion synthesis (TLS). Along with ImuA and ImuB is required for the error-prone processing of DNA lesions (By similarity).</text>
</comment>
<comment type="catalytic activity">
    <reaction>
        <text>DNA(n) + a 2'-deoxyribonucleoside 5'-triphosphate = DNA(n+1) + diphosphate</text>
        <dbReference type="Rhea" id="RHEA:22508"/>
        <dbReference type="Rhea" id="RHEA-COMP:17339"/>
        <dbReference type="Rhea" id="RHEA-COMP:17340"/>
        <dbReference type="ChEBI" id="CHEBI:33019"/>
        <dbReference type="ChEBI" id="CHEBI:61560"/>
        <dbReference type="ChEBI" id="CHEBI:173112"/>
        <dbReference type="EC" id="2.7.7.7"/>
    </reaction>
</comment>
<comment type="subcellular location">
    <subcellularLocation>
        <location evidence="1">Cytoplasm</location>
    </subcellularLocation>
</comment>
<comment type="similarity">
    <text evidence="2">Belongs to the DNA polymerase type-C family. DnaE2 subfamily.</text>
</comment>